<feature type="signal peptide">
    <location>
        <begin position="1"/>
        <end position="17"/>
    </location>
</feature>
<feature type="propeptide" id="PRO_0000021521" evidence="3 4">
    <location>
        <begin position="18"/>
        <end position="22"/>
    </location>
</feature>
<feature type="chain" id="PRO_0000021522" description="Retinol-binding protein 3">
    <location>
        <begin position="23"/>
        <end position="1286"/>
    </location>
</feature>
<feature type="repeat" description="1">
    <location>
        <begin position="23"/>
        <end position="323"/>
    </location>
</feature>
<feature type="repeat" description="2">
    <location>
        <begin position="324"/>
        <end position="631"/>
    </location>
</feature>
<feature type="repeat" description="3">
    <location>
        <begin position="632"/>
        <end position="932"/>
    </location>
</feature>
<feature type="repeat" description="4">
    <location>
        <begin position="933"/>
        <end position="1231"/>
    </location>
</feature>
<feature type="region of interest" description="4 X approximate tandem repeats">
    <location>
        <begin position="23"/>
        <end position="1231"/>
    </location>
</feature>
<feature type="region of interest" description="Disordered" evidence="2">
    <location>
        <begin position="389"/>
        <end position="415"/>
    </location>
</feature>
<feature type="region of interest" description="Disordered" evidence="2">
    <location>
        <begin position="1227"/>
        <end position="1286"/>
    </location>
</feature>
<feature type="compositionally biased region" description="Basic residues" evidence="2">
    <location>
        <begin position="1233"/>
        <end position="1252"/>
    </location>
</feature>
<feature type="glycosylation site" description="N-linked (GlcNAc...) asparagine" evidence="1">
    <location>
        <position position="107"/>
    </location>
</feature>
<feature type="glycosylation site" description="N-linked (GlcNAc...) asparagine" evidence="1">
    <location>
        <position position="161"/>
    </location>
</feature>
<feature type="glycosylation site" description="N-linked (GlcNAc...) asparagine" evidence="1">
    <location>
        <position position="205"/>
    </location>
</feature>
<feature type="glycosylation site" description="N-linked (GlcNAc...) asparagine" evidence="1">
    <location>
        <position position="513"/>
    </location>
</feature>
<feature type="glycosylation site" description="N-linked (GlcNAc...) asparagine" evidence="1">
    <location>
        <position position="1114"/>
    </location>
</feature>
<feature type="sequence conflict" description="In Ref. 3; AA sequence." evidence="5" ref="3">
    <original>C</original>
    <variation>E</variation>
    <location>
        <position position="40"/>
    </location>
</feature>
<feature type="sequence conflict" description="In Ref. 4; AA sequence." evidence="5" ref="4">
    <original>C</original>
    <variation>T</variation>
    <location>
        <position position="40"/>
    </location>
</feature>
<feature type="sequence conflict" description="In Ref. 4; AA sequence." evidence="5" ref="4">
    <original>N</original>
    <variation>V</variation>
    <location>
        <position position="44"/>
    </location>
</feature>
<feature type="sequence conflict" description="In Ref. 2; AAA30594." evidence="5" ref="2">
    <original>N</original>
    <variation>D</variation>
    <location>
        <position position="1115"/>
    </location>
</feature>
<feature type="sequence conflict" description="In Ref. 2; AAA30594." evidence="5" ref="2">
    <original>HR</original>
    <variation>QQ</variation>
    <location>
        <begin position="1249"/>
        <end position="1250"/>
    </location>
</feature>
<evidence type="ECO:0000255" key="1"/>
<evidence type="ECO:0000256" key="2">
    <source>
        <dbReference type="SAM" id="MobiDB-lite"/>
    </source>
</evidence>
<evidence type="ECO:0000269" key="3">
    <source>
    </source>
</evidence>
<evidence type="ECO:0000269" key="4">
    <source>
    </source>
</evidence>
<evidence type="ECO:0000305" key="5"/>
<keyword id="KW-0903">Direct protein sequencing</keyword>
<keyword id="KW-0272">Extracellular matrix</keyword>
<keyword id="KW-0325">Glycoprotein</keyword>
<keyword id="KW-1185">Reference proteome</keyword>
<keyword id="KW-0677">Repeat</keyword>
<keyword id="KW-0964">Secreted</keyword>
<keyword id="KW-0732">Signal</keyword>
<keyword id="KW-0813">Transport</keyword>
<keyword id="KW-0845">Vitamin A</keyword>
<gene>
    <name type="primary">RBP3</name>
</gene>
<dbReference type="EMBL" id="M20748">
    <property type="protein sequence ID" value="AAA30591.1"/>
    <property type="molecule type" value="Genomic_DNA"/>
</dbReference>
<dbReference type="EMBL" id="M27870">
    <property type="protein sequence ID" value="AAA30594.1"/>
    <property type="molecule type" value="mRNA"/>
</dbReference>
<dbReference type="EMBL" id="M26119">
    <property type="protein sequence ID" value="AAA30593.1"/>
    <property type="molecule type" value="mRNA"/>
</dbReference>
<dbReference type="PIR" id="A32205">
    <property type="entry name" value="RJBOP"/>
</dbReference>
<dbReference type="RefSeq" id="NP_776589.1">
    <property type="nucleotide sequence ID" value="NM_174164.1"/>
</dbReference>
<dbReference type="EMDB" id="EMD-22474"/>
<dbReference type="SMR" id="P12661"/>
<dbReference type="FunCoup" id="P12661">
    <property type="interactions" value="87"/>
</dbReference>
<dbReference type="IntAct" id="P12661">
    <property type="interactions" value="1"/>
</dbReference>
<dbReference type="MINT" id="P12661"/>
<dbReference type="STRING" id="9913.ENSBTAP00000006585"/>
<dbReference type="MEROPS" id="S41.953"/>
<dbReference type="MEROPS" id="S41.954"/>
<dbReference type="GlyCosmos" id="P12661">
    <property type="glycosylation" value="5 sites, No reported glycans"/>
</dbReference>
<dbReference type="GlyGen" id="P12661">
    <property type="glycosylation" value="5 sites"/>
</dbReference>
<dbReference type="PaxDb" id="9913-ENSBTAP00000006585"/>
<dbReference type="ABCD" id="P12661">
    <property type="antibodies" value="1 sequenced antibody"/>
</dbReference>
<dbReference type="GeneID" id="281443"/>
<dbReference type="KEGG" id="bta:281443"/>
<dbReference type="CTD" id="5949"/>
<dbReference type="eggNOG" id="ENOG502QW81">
    <property type="taxonomic scope" value="Eukaryota"/>
</dbReference>
<dbReference type="InParanoid" id="P12661"/>
<dbReference type="OrthoDB" id="10268064at2759"/>
<dbReference type="Proteomes" id="UP000009136">
    <property type="component" value="Unplaced"/>
</dbReference>
<dbReference type="GO" id="GO:0090658">
    <property type="term" value="C:cone matrix sheath"/>
    <property type="evidence" value="ECO:0000318"/>
    <property type="project" value="GO_Central"/>
</dbReference>
<dbReference type="GO" id="GO:0005576">
    <property type="term" value="C:extracellular region"/>
    <property type="evidence" value="ECO:0007669"/>
    <property type="project" value="UniProtKB-KW"/>
</dbReference>
<dbReference type="GO" id="GO:0016918">
    <property type="term" value="F:retinal binding"/>
    <property type="evidence" value="ECO:0007669"/>
    <property type="project" value="UniProtKB-KW"/>
</dbReference>
<dbReference type="GO" id="GO:0019841">
    <property type="term" value="F:retinol binding"/>
    <property type="evidence" value="ECO:0000318"/>
    <property type="project" value="GO_Central"/>
</dbReference>
<dbReference type="GO" id="GO:0008236">
    <property type="term" value="F:serine-type peptidase activity"/>
    <property type="evidence" value="ECO:0007669"/>
    <property type="project" value="InterPro"/>
</dbReference>
<dbReference type="GO" id="GO:0006508">
    <property type="term" value="P:proteolysis"/>
    <property type="evidence" value="ECO:0007669"/>
    <property type="project" value="InterPro"/>
</dbReference>
<dbReference type="CDD" id="cd07563">
    <property type="entry name" value="Peptidase_S41_IRBP"/>
    <property type="match status" value="4"/>
</dbReference>
<dbReference type="FunFam" id="3.90.226.10:FF:000031">
    <property type="entry name" value="Interphotoreceptor retinoid binding protein"/>
    <property type="match status" value="1"/>
</dbReference>
<dbReference type="FunFam" id="3.30.750.44:FF:000009">
    <property type="entry name" value="Retinol-binding protein 3"/>
    <property type="match status" value="1"/>
</dbReference>
<dbReference type="FunFam" id="3.90.226.10:FF:000037">
    <property type="entry name" value="Retinol-binding protein 3"/>
    <property type="match status" value="1"/>
</dbReference>
<dbReference type="FunFam" id="3.90.226.10:FF:000038">
    <property type="entry name" value="Retinol-binding protein 3"/>
    <property type="match status" value="1"/>
</dbReference>
<dbReference type="FunFam" id="3.90.226.10:FF:000044">
    <property type="entry name" value="Retinol-binding protein 3"/>
    <property type="match status" value="1"/>
</dbReference>
<dbReference type="Gene3D" id="3.30.750.44">
    <property type="match status" value="4"/>
</dbReference>
<dbReference type="Gene3D" id="3.90.226.10">
    <property type="entry name" value="2-enoyl-CoA Hydratase, Chain A, domain 1"/>
    <property type="match status" value="4"/>
</dbReference>
<dbReference type="InterPro" id="IPR029045">
    <property type="entry name" value="ClpP/crotonase-like_dom_sf"/>
</dbReference>
<dbReference type="InterPro" id="IPR005151">
    <property type="entry name" value="Tail-specific_protease"/>
</dbReference>
<dbReference type="PANTHER" id="PTHR11261">
    <property type="entry name" value="INTERPHOTORECEPTOR RETINOID-BINDING PROTEIN"/>
    <property type="match status" value="1"/>
</dbReference>
<dbReference type="PANTHER" id="PTHR11261:SF3">
    <property type="entry name" value="RETINOL-BINDING PROTEIN 3"/>
    <property type="match status" value="1"/>
</dbReference>
<dbReference type="Pfam" id="PF03572">
    <property type="entry name" value="Peptidase_S41"/>
    <property type="match status" value="4"/>
</dbReference>
<dbReference type="Pfam" id="PF11918">
    <property type="entry name" value="Peptidase_S41_N"/>
    <property type="match status" value="4"/>
</dbReference>
<dbReference type="SMART" id="SM00245">
    <property type="entry name" value="TSPc"/>
    <property type="match status" value="4"/>
</dbReference>
<dbReference type="SUPFAM" id="SSF52096">
    <property type="entry name" value="ClpP/crotonase"/>
    <property type="match status" value="4"/>
</dbReference>
<protein>
    <recommendedName>
        <fullName>Retinol-binding protein 3</fullName>
    </recommendedName>
    <alternativeName>
        <fullName>Interphotoreceptor retinoid-binding protein</fullName>
        <shortName>IRBP</shortName>
    </alternativeName>
    <alternativeName>
        <fullName>Interstitial retinol-binding protein</fullName>
    </alternativeName>
    <alternativeName>
        <fullName>Protein 7S</fullName>
    </alternativeName>
</protein>
<reference key="1">
    <citation type="journal article" date="1989" name="J. Biol. Chem.">
        <title>Interphotoreceptor retinoid-binding protein. Gene characterization, protein repeat structure, and its evolution.</title>
        <authorList>
            <person name="Borst D.E."/>
            <person name="Redmond T.M."/>
            <person name="Elser J.E."/>
            <person name="Gonda M.A."/>
            <person name="Wiggert B."/>
            <person name="Chader G.J."/>
            <person name="Nickerson J.M."/>
        </authorList>
    </citation>
    <scope>NUCLEOTIDE SEQUENCE [GENOMIC DNA]</scope>
</reference>
<reference key="2">
    <citation type="journal article" date="1989" name="Gene">
        <title>Synthesis of an immunopathogenic fusion protein derived from a bovine interphotoreceptor retinoid-binding protein cDNA clone.</title>
        <authorList>
            <person name="Redmond T.M."/>
            <person name="Si J.S."/>
            <person name="Barrett D.J."/>
            <person name="Borst D.E."/>
            <person name="Rainier S."/>
            <person name="Kotake S."/>
            <person name="Gery I."/>
            <person name="Nickerson J.M."/>
        </authorList>
    </citation>
    <scope>NUCLEOTIDE SEQUENCE [MRNA]</scope>
</reference>
<reference key="3">
    <citation type="journal article" date="1986" name="Biochem. J.">
        <title>Interspecies conservation of structure of interphotoreceptor retinoid-binding protein. Similarities and differences as adjudged by peptide mapping and N-terminal sequencing.</title>
        <authorList>
            <person name="Redmond T.M."/>
            <person name="Wiggert B."/>
            <person name="Robey F.A."/>
            <person name="Chader G.J."/>
        </authorList>
    </citation>
    <scope>PROTEIN SEQUENCE OF 23-56</scope>
    <source>
        <tissue>Retina</tissue>
    </source>
</reference>
<reference key="4">
    <citation type="journal article" date="1985" name="J. Biol. Chem.">
        <title>Properties of an interphotoreceptor retinoid-binding protein from bovine retina.</title>
        <authorList>
            <person name="Saari J.C."/>
            <person name="Teller D.C."/>
            <person name="Crabb J.W."/>
            <person name="Bredberg L."/>
        </authorList>
    </citation>
    <scope>PROTEIN SEQUENCE OF 23-46</scope>
</reference>
<reference key="5">
    <citation type="journal article" date="1985" name="Biochem. Biophys. Res. Commun.">
        <title>cDNA clones encoding bovine interphotoreceptor retinoid binding protein.</title>
        <authorList>
            <person name="Barrett D.J."/>
            <person name="Redmond T.M."/>
            <person name="Wiggert B."/>
            <person name="Oprian D.D."/>
            <person name="Chader G.J."/>
            <person name="Nickerson J.M."/>
        </authorList>
    </citation>
    <scope>NUCLEOTIDE SEQUENCE OF 1194-1221</scope>
</reference>
<name>RET3_BOVIN</name>
<proteinExistence type="evidence at protein level"/>
<organism>
    <name type="scientific">Bos taurus</name>
    <name type="common">Bovine</name>
    <dbReference type="NCBI Taxonomy" id="9913"/>
    <lineage>
        <taxon>Eukaryota</taxon>
        <taxon>Metazoa</taxon>
        <taxon>Chordata</taxon>
        <taxon>Craniata</taxon>
        <taxon>Vertebrata</taxon>
        <taxon>Euteleostomi</taxon>
        <taxon>Mammalia</taxon>
        <taxon>Eutheria</taxon>
        <taxon>Laurasiatheria</taxon>
        <taxon>Artiodactyla</taxon>
        <taxon>Ruminantia</taxon>
        <taxon>Pecora</taxon>
        <taxon>Bovidae</taxon>
        <taxon>Bovinae</taxon>
        <taxon>Bos</taxon>
    </lineage>
</organism>
<accession>P12661</accession>
<comment type="function">
    <text>IRBP shuttles 11-cis and all trans retinoids between the retinol isomerase in the pigment epithelium and the visual pigments in the photoreceptor cells of the retina.</text>
</comment>
<comment type="subcellular location">
    <subcellularLocation>
        <location>Secreted</location>
        <location>Extracellular space</location>
        <location>Extracellular matrix</location>
        <location>Interphotoreceptor matrix</location>
    </subcellularLocation>
    <text>Interphotoreceptor matrix that permeates the space between the retina and the contiguous layer of pigment epithelium cells.</text>
</comment>
<comment type="similarity">
    <text evidence="5">Belongs to the peptidase S41A family.</text>
</comment>
<sequence>MVRKWALLLPMLLCGLTGPAHLFQPSLVLEMAQVLLDNYCFPENLMGMQGAIEQAIKSQEILSISDPQTLAHVLTAGVQSSLNDPRLVISYEPSTLEAPPRAPAVTNLTLEEIIAGLQDGLRHEILEGNVGYLRVDDIPGQEVMSKLRSFLVANVWRKLVNTSALVLDLRHCTGGHVSGIPYVISYLHPGSTVSHVDTVYDRPSNTTTEIWTLPEALGEKYSADKDVVVLTSSRTGGVAEDIAYILKQMRRAIVVGERTVGGALNLQKLRVGQSDFFLTVPVSRSLGPLGEGSQTWEGSGVLPCVGTPAEQALEKALAVLMLRRALPGVIQRLQEALREYYTLVDRVPALLSHLAAMDLSSVVSEDDLVTKLNAGLQAVSEDPRLQVQVVRPKEASSGPEEEAEEPPEAVPEVPEDEAVRRALVDSVFQVSVLPGNVGYLRFDSFADASVLEVLGPYILHQVWEPLQDTEHLIMDLRQNPGGPSSAVPLLLSYFQSPDASPVRLFSTYDRRTNITREHFSQTELLGRPYGTQRGVYLLTSHRTATAAEELAFLMQSLGWATLVGEITAGSLLHTHTVSLLETPEGGLALTVPVLTFIDNHGECWLGGGVVPDAIVLAEEALDRAQEVLEFHRSLGELVEGTGRLLEAHYARPEVVGQMGALLRAKLAQGAYRTAVDLESLASQLTADLQEMSGDHRLLVFHSPGEMVAEEAPPPPPVVPSPEELSYLIEALFKTEVLPGQLGYLRFDAMAELETVKAVGPQLVQLVWQKLVDTAALVVDLRYNPGSYSTAVPLLCSYFFEAEPRRHLYSVFDRATSRVTEVWTLPHVTGQRYGSHKDLYVLVSHTSGSAAEAFAHTMQDLQRATIIGEPTAGGALSVGIYQVGSSALYASMPTQMAMSASTGEAWDLAGVEPDITVPMSVALSTARDIVTLRAKVPTVLQTAGKLVADNYASPELGVKMAAELSGLQSRYARVTSEAALAELLQADLQVLSGDPHLKTAHIPEDAKDRIPGIVPMQIPSPEVFEDLIKFSFHTNVLEGNVGYLRFDMFGDCELLTQVSELLVEHVWKKIVHTDALIVDMRFNIGGPTSSISALCSYFFDEGPPILLDKIYNRPNNSVSELWTLSQLEGERYGSKKSMVILTSTLTAGAAEEFTYIMKRLGRALVIGEVTSGGCQPPQTYHVDDTDLYLTIPTARSVGAADGSSWEGVGVVPDVAVPAEAALTRAQEMLQHTPLRARRSPRLHGRRKGHHRQSQGRAGSLGRNQGVVRPEVLTEAPSGQKRGLLQCG</sequence>